<accession>B7NDA4</accession>
<sequence length="443" mass="48893">MSTSDSIVSSQTKQSSWRKSDTTWTLGLFGTAIGAGVLFFPIRAGFGGLIPILLMLVLAYPIAFYCHRALARLCLSGSNPSGNITETVEEHFGKTGGVVITFLYFFAICPLLWIYGVTITNTFMTFWENQLGFAPLNRGFVALFLLLLMAFVIWFGKDLMVKVMSYLVWPFIASLVLISLSLIPYWNSAVIDQVDLGSLSLTGHDGILITVWLGISIMVFSFNFSPIVSSFVVSKREEYEKDFGRDFTERKCSQIISRASMLMVAVVMFFAFSCLFTLSPANMAEAKAQNIPVLSYLANHFASMTGTKTTFAITLEYAASIIALVAIFKSFFGHYLGTLEGLNGLILKFGYKGDKTKVSLGKLNTLSMIFIMGSTWVVAYANPNILDLIEAMGAPIIASLLCLLPMYAIRKAPSLAKYRGRLDNVFVTVIGLLTILNIVYKLF</sequence>
<gene>
    <name evidence="1" type="primary">tdcC</name>
    <name type="ordered locus">ECUMN_3600</name>
</gene>
<organism>
    <name type="scientific">Escherichia coli O17:K52:H18 (strain UMN026 / ExPEC)</name>
    <dbReference type="NCBI Taxonomy" id="585056"/>
    <lineage>
        <taxon>Bacteria</taxon>
        <taxon>Pseudomonadati</taxon>
        <taxon>Pseudomonadota</taxon>
        <taxon>Gammaproteobacteria</taxon>
        <taxon>Enterobacterales</taxon>
        <taxon>Enterobacteriaceae</taxon>
        <taxon>Escherichia</taxon>
    </lineage>
</organism>
<proteinExistence type="inferred from homology"/>
<keyword id="KW-0029">Amino-acid transport</keyword>
<keyword id="KW-0997">Cell inner membrane</keyword>
<keyword id="KW-1003">Cell membrane</keyword>
<keyword id="KW-0472">Membrane</keyword>
<keyword id="KW-0769">Symport</keyword>
<keyword id="KW-0812">Transmembrane</keyword>
<keyword id="KW-1133">Transmembrane helix</keyword>
<keyword id="KW-0813">Transport</keyword>
<protein>
    <recommendedName>
        <fullName evidence="1">Threonine/serine transporter TdcC</fullName>
    </recommendedName>
    <alternativeName>
        <fullName evidence="1">H(+)/threonine-serine symporter</fullName>
    </alternativeName>
</protein>
<comment type="function">
    <text evidence="1">Involved in the import of threonine and serine into the cell, with the concomitant import of a proton (symport system).</text>
</comment>
<comment type="catalytic activity">
    <reaction evidence="1">
        <text>L-threonine(in) + H(+)(in) = L-threonine(out) + H(+)(out)</text>
        <dbReference type="Rhea" id="RHEA:28883"/>
        <dbReference type="ChEBI" id="CHEBI:15378"/>
        <dbReference type="ChEBI" id="CHEBI:57926"/>
    </reaction>
    <physiologicalReaction direction="right-to-left" evidence="1">
        <dbReference type="Rhea" id="RHEA:28885"/>
    </physiologicalReaction>
</comment>
<comment type="catalytic activity">
    <reaction evidence="1">
        <text>L-serine(in) + H(+)(in) = L-serine(out) + H(+)(out)</text>
        <dbReference type="Rhea" id="RHEA:28887"/>
        <dbReference type="ChEBI" id="CHEBI:15378"/>
        <dbReference type="ChEBI" id="CHEBI:33384"/>
    </reaction>
    <physiologicalReaction direction="right-to-left" evidence="1">
        <dbReference type="Rhea" id="RHEA:28889"/>
    </physiologicalReaction>
</comment>
<comment type="subcellular location">
    <subcellularLocation>
        <location evidence="1">Cell inner membrane</location>
        <topology evidence="1">Multi-pass membrane protein</topology>
    </subcellularLocation>
</comment>
<comment type="similarity">
    <text evidence="1">Belongs to the amino acid/polyamine transporter 2 family. SdaC/TdcC subfamily.</text>
</comment>
<name>TDCC_ECOLU</name>
<feature type="chain" id="PRO_1000147630" description="Threonine/serine transporter TdcC">
    <location>
        <begin position="1"/>
        <end position="443"/>
    </location>
</feature>
<feature type="transmembrane region" description="Helical" evidence="1">
    <location>
        <begin position="22"/>
        <end position="42"/>
    </location>
</feature>
<feature type="transmembrane region" description="Helical" evidence="1">
    <location>
        <begin position="44"/>
        <end position="64"/>
    </location>
</feature>
<feature type="transmembrane region" description="Helical" evidence="1">
    <location>
        <begin position="97"/>
        <end position="117"/>
    </location>
</feature>
<feature type="transmembrane region" description="Helical" evidence="1">
    <location>
        <begin position="140"/>
        <end position="160"/>
    </location>
</feature>
<feature type="transmembrane region" description="Helical" evidence="1">
    <location>
        <begin position="163"/>
        <end position="183"/>
    </location>
</feature>
<feature type="transmembrane region" description="Helical" evidence="1">
    <location>
        <begin position="207"/>
        <end position="227"/>
    </location>
</feature>
<feature type="transmembrane region" description="Helical" evidence="1">
    <location>
        <begin position="261"/>
        <end position="281"/>
    </location>
</feature>
<feature type="transmembrane region" description="Helical" evidence="1">
    <location>
        <begin position="311"/>
        <end position="331"/>
    </location>
</feature>
<feature type="transmembrane region" description="Helical" evidence="1">
    <location>
        <begin position="366"/>
        <end position="386"/>
    </location>
</feature>
<feature type="transmembrane region" description="Helical" evidence="1">
    <location>
        <begin position="389"/>
        <end position="409"/>
    </location>
</feature>
<feature type="transmembrane region" description="Helical" evidence="1">
    <location>
        <begin position="423"/>
        <end position="443"/>
    </location>
</feature>
<reference key="1">
    <citation type="journal article" date="2009" name="PLoS Genet.">
        <title>Organised genome dynamics in the Escherichia coli species results in highly diverse adaptive paths.</title>
        <authorList>
            <person name="Touchon M."/>
            <person name="Hoede C."/>
            <person name="Tenaillon O."/>
            <person name="Barbe V."/>
            <person name="Baeriswyl S."/>
            <person name="Bidet P."/>
            <person name="Bingen E."/>
            <person name="Bonacorsi S."/>
            <person name="Bouchier C."/>
            <person name="Bouvet O."/>
            <person name="Calteau A."/>
            <person name="Chiapello H."/>
            <person name="Clermont O."/>
            <person name="Cruveiller S."/>
            <person name="Danchin A."/>
            <person name="Diard M."/>
            <person name="Dossat C."/>
            <person name="Karoui M.E."/>
            <person name="Frapy E."/>
            <person name="Garry L."/>
            <person name="Ghigo J.M."/>
            <person name="Gilles A.M."/>
            <person name="Johnson J."/>
            <person name="Le Bouguenec C."/>
            <person name="Lescat M."/>
            <person name="Mangenot S."/>
            <person name="Martinez-Jehanne V."/>
            <person name="Matic I."/>
            <person name="Nassif X."/>
            <person name="Oztas S."/>
            <person name="Petit M.A."/>
            <person name="Pichon C."/>
            <person name="Rouy Z."/>
            <person name="Ruf C.S."/>
            <person name="Schneider D."/>
            <person name="Tourret J."/>
            <person name="Vacherie B."/>
            <person name="Vallenet D."/>
            <person name="Medigue C."/>
            <person name="Rocha E.P.C."/>
            <person name="Denamur E."/>
        </authorList>
    </citation>
    <scope>NUCLEOTIDE SEQUENCE [LARGE SCALE GENOMIC DNA]</scope>
    <source>
        <strain>UMN026 / ExPEC</strain>
    </source>
</reference>
<evidence type="ECO:0000255" key="1">
    <source>
        <dbReference type="HAMAP-Rule" id="MF_01583"/>
    </source>
</evidence>
<dbReference type="EMBL" id="CU928163">
    <property type="protein sequence ID" value="CAR14754.1"/>
    <property type="molecule type" value="Genomic_DNA"/>
</dbReference>
<dbReference type="RefSeq" id="WP_000107721.1">
    <property type="nucleotide sequence ID" value="NC_011751.1"/>
</dbReference>
<dbReference type="RefSeq" id="YP_002414259.1">
    <property type="nucleotide sequence ID" value="NC_011751.1"/>
</dbReference>
<dbReference type="SMR" id="B7NDA4"/>
<dbReference type="STRING" id="585056.ECUMN_3600"/>
<dbReference type="KEGG" id="eum:ECUMN_3600"/>
<dbReference type="PATRIC" id="fig|585056.7.peg.3777"/>
<dbReference type="HOGENOM" id="CLU_052043_1_1_6"/>
<dbReference type="Proteomes" id="UP000007097">
    <property type="component" value="Chromosome"/>
</dbReference>
<dbReference type="GO" id="GO:0005886">
    <property type="term" value="C:plasma membrane"/>
    <property type="evidence" value="ECO:0007669"/>
    <property type="project" value="UniProtKB-SubCell"/>
</dbReference>
<dbReference type="GO" id="GO:0015194">
    <property type="term" value="F:L-serine transmembrane transporter activity"/>
    <property type="evidence" value="ECO:0007669"/>
    <property type="project" value="InterPro"/>
</dbReference>
<dbReference type="GO" id="GO:0015293">
    <property type="term" value="F:symporter activity"/>
    <property type="evidence" value="ECO:0007669"/>
    <property type="project" value="UniProtKB-UniRule"/>
</dbReference>
<dbReference type="GO" id="GO:0015565">
    <property type="term" value="F:threonine efflux transmembrane transporter activity"/>
    <property type="evidence" value="ECO:0007669"/>
    <property type="project" value="InterPro"/>
</dbReference>
<dbReference type="HAMAP" id="MF_01583">
    <property type="entry name" value="Thr_Ser_transp_TdcC"/>
    <property type="match status" value="1"/>
</dbReference>
<dbReference type="InterPro" id="IPR018227">
    <property type="entry name" value="Amino_acid_transport_2"/>
</dbReference>
<dbReference type="InterPro" id="IPR004694">
    <property type="entry name" value="Hydroxy_aa_transpt"/>
</dbReference>
<dbReference type="InterPro" id="IPR023726">
    <property type="entry name" value="Thr/Ser_transpt_TdcC"/>
</dbReference>
<dbReference type="NCBIfam" id="NF010152">
    <property type="entry name" value="PRK13629.1"/>
    <property type="match status" value="1"/>
</dbReference>
<dbReference type="NCBIfam" id="TIGR00814">
    <property type="entry name" value="stp"/>
    <property type="match status" value="1"/>
</dbReference>
<dbReference type="PANTHER" id="PTHR35334">
    <property type="entry name" value="SERINE TRANSPORTER"/>
    <property type="match status" value="1"/>
</dbReference>
<dbReference type="PANTHER" id="PTHR35334:SF1">
    <property type="entry name" value="THREONINE_SERINE TRANSPORTER TDCC"/>
    <property type="match status" value="1"/>
</dbReference>
<dbReference type="Pfam" id="PF03222">
    <property type="entry name" value="Trp_Tyr_perm"/>
    <property type="match status" value="1"/>
</dbReference>